<keyword id="KW-1222">Bradykinin receptor impairing toxin</keyword>
<keyword id="KW-0903">Direct protein sequencing</keyword>
<keyword id="KW-1213">G-protein coupled receptor impairing toxin</keyword>
<keyword id="KW-0964">Secreted</keyword>
<keyword id="KW-0800">Toxin</keyword>
<keyword id="KW-0838">Vasoactive</keyword>
<keyword id="KW-0840">Vasodilator</keyword>
<evidence type="ECO:0000269" key="1">
    <source>
    </source>
</evidence>
<evidence type="ECO:0000305" key="2"/>
<proteinExistence type="evidence at protein level"/>
<accession>P58396</accession>
<organism>
    <name type="scientific">Lycosa erythrognatha</name>
    <name type="common">Wolf spider</name>
    <name type="synonym">Scaptocosa raptoria</name>
    <dbReference type="NCBI Taxonomy" id="332789"/>
    <lineage>
        <taxon>Eukaryota</taxon>
        <taxon>Metazoa</taxon>
        <taxon>Ecdysozoa</taxon>
        <taxon>Arthropoda</taxon>
        <taxon>Chelicerata</taxon>
        <taxon>Arachnida</taxon>
        <taxon>Araneae</taxon>
        <taxon>Araneomorphae</taxon>
        <taxon>Entelegynae</taxon>
        <taxon>Lycosoidea</taxon>
        <taxon>Lycosidae</taxon>
        <taxon>Lycosa</taxon>
    </lineage>
</organism>
<feature type="chain" id="PRO_0000084309" description="Kinin-like peptide-S">
    <location>
        <begin position="1"/>
        <end position="14" status="greater than"/>
    </location>
</feature>
<feature type="non-terminal residue">
    <location>
        <position position="14"/>
    </location>
</feature>
<sequence>RLVLEVXASVEADV</sequence>
<name>KLPS_LYCER</name>
<dbReference type="ArachnoServer" id="AS000005">
    <property type="toxin name" value="Kinin-1-Lycosa erythognatha"/>
</dbReference>
<dbReference type="GO" id="GO:0005576">
    <property type="term" value="C:extracellular region"/>
    <property type="evidence" value="ECO:0007669"/>
    <property type="project" value="UniProtKB-SubCell"/>
</dbReference>
<dbReference type="GO" id="GO:0090729">
    <property type="term" value="F:toxin activity"/>
    <property type="evidence" value="ECO:0007669"/>
    <property type="project" value="UniProtKB-KW"/>
</dbReference>
<dbReference type="GO" id="GO:0042311">
    <property type="term" value="P:vasodilation"/>
    <property type="evidence" value="ECO:0007669"/>
    <property type="project" value="UniProtKB-KW"/>
</dbReference>
<reference key="1">
    <citation type="journal article" date="1998" name="Toxicon">
        <title>Isolation, characterization and biological properties of two kinin-like peptides (peptide-S and peptide-R) from Scaptocosa raptoria venom.</title>
        <authorList>
            <person name="Ferreira L.A.F."/>
            <person name="Lucas S.M."/>
            <person name="Alves E.W."/>
            <person name="Hermann V.V."/>
            <person name="Reichl A.P."/>
            <person name="Habermehl G."/>
            <person name="Zingali R.B."/>
        </authorList>
    </citation>
    <scope>PROTEIN SEQUENCE</scope>
    <scope>FUNCTION</scope>
    <source>
        <tissue>Venom</tissue>
    </source>
</reference>
<protein>
    <recommendedName>
        <fullName>Kinin-like peptide-S</fullName>
    </recommendedName>
</protein>
<comment type="function">
    <text evidence="1">Has kinin-like biological properties. Causes contraction of isolated guinea pig ileum and relaxation of rat duodenum. Has a number of hypotensive properties: decreases arterial blood pressure and increases capillary permeability. Induces edema when injected into hindpaw of rat. May target bradykinin receptors (BDKRB). Does not lyse unfibrinolysed blood.</text>
</comment>
<comment type="subcellular location">
    <subcellularLocation>
        <location>Secreted</location>
    </subcellularLocation>
</comment>
<comment type="tissue specificity">
    <text>Expressed by the venom gland.</text>
</comment>
<comment type="miscellaneous">
    <text>The molecular weight of about 4 kDa suggests that the mature peptide comprises about 36 amino acid residues.</text>
</comment>
<comment type="similarity">
    <text evidence="2">Belongs to the bradykinin-related peptide family.</text>
</comment>